<reference key="1">
    <citation type="journal article" date="1990" name="Nucleic Acids Res.">
        <title>Complete nucleotide sequence of plasmid pME2001 of Methanobacterium thermoautotrophicum (Marburg).</title>
        <authorList>
            <person name="Bokranz M."/>
            <person name="Klein A."/>
            <person name="Meile L."/>
        </authorList>
    </citation>
    <scope>NUCLEOTIDE SEQUENCE [GENOMIC DNA]</scope>
    <source>
        <strain>ATCC BAA-927 / DSM 2133 / JCM 14651 / NBRC 100331 / OCM 82 / Marburg</strain>
        <plasmid>pME2001</plasmid>
    </source>
</reference>
<reference key="2">
    <citation type="journal article" date="2010" name="J. Bacteriol.">
        <title>Complete genome sequence of Methanothermobacter marburgensis, a methanoarchaeon model organism.</title>
        <authorList>
            <person name="Liesegang H."/>
            <person name="Kaster A.K."/>
            <person name="Wiezer A."/>
            <person name="Goenrich M."/>
            <person name="Wollherr A."/>
            <person name="Seedorf H."/>
            <person name="Gottschalk G."/>
            <person name="Thauer R.K."/>
        </authorList>
    </citation>
    <scope>NUCLEOTIDE SEQUENCE [LARGE SCALE GENOMIC DNA]</scope>
    <source>
        <strain>ATCC BAA-927 / DSM 2133 / JCM 14651 / NBRC 100331 / OCM 82 / Marburg</strain>
        <plasmid>pMTBMA4</plasmid>
    </source>
</reference>
<protein>
    <recommendedName>
        <fullName>Uncharacterized protein MTBMA_p00030</fullName>
    </recommendedName>
</protein>
<gene>
    <name type="ordered locus">MTBMA_p00030</name>
</gene>
<geneLocation type="plasmid">
    <name>pME2001</name>
</geneLocation>
<geneLocation type="plasmid">
    <name>pMTBMA4</name>
</geneLocation>
<name>Y2003_METTM</name>
<organism>
    <name type="scientific">Methanothermobacter marburgensis (strain ATCC BAA-927 / DSM 2133 / JCM 14651 / NBRC 100331 / OCM 82 / Marburg)</name>
    <name type="common">Methanobacterium thermoautotrophicum</name>
    <dbReference type="NCBI Taxonomy" id="79929"/>
    <lineage>
        <taxon>Archaea</taxon>
        <taxon>Methanobacteriati</taxon>
        <taxon>Methanobacteriota</taxon>
        <taxon>Methanomada group</taxon>
        <taxon>Methanobacteria</taxon>
        <taxon>Methanobacteriales</taxon>
        <taxon>Methanobacteriaceae</taxon>
        <taxon>Methanothermobacter</taxon>
    </lineage>
</organism>
<proteinExistence type="predicted"/>
<sequence length="151" mass="16744">MSLLGGMWKSTKPSRSKSPKPSSNPLRSSGLNSGMSSRLNSKSSLRSGHSRSSNTGRSSRQKSISGSLGSNPISSSRLNSKTLLSSIFMCKYLYPPWINNFGNFGRVEPPPLIEKNLKKSKKIKIKIHPWTGFPYNQVLSEKAKKYKKIRG</sequence>
<keyword id="KW-0614">Plasmid</keyword>
<evidence type="ECO:0000256" key="1">
    <source>
        <dbReference type="SAM" id="MobiDB-lite"/>
    </source>
</evidence>
<dbReference type="EMBL" id="X17205">
    <property type="protein sequence ID" value="CAA35077.1"/>
    <property type="molecule type" value="Genomic_DNA"/>
</dbReference>
<dbReference type="EMBL" id="CP001711">
    <property type="protein sequence ID" value="ADL59368.1"/>
    <property type="molecule type" value="Genomic_DNA"/>
</dbReference>
<dbReference type="KEGG" id="mmg:MTBMA_p00030"/>
<dbReference type="HOGENOM" id="CLU_1727274_0_0_2"/>
<dbReference type="Proteomes" id="UP000000345">
    <property type="component" value="Plasmid pMTBMA4"/>
</dbReference>
<feature type="chain" id="PRO_0000066383" description="Uncharacterized protein MTBMA_p00030">
    <location>
        <begin position="1"/>
        <end position="151"/>
    </location>
</feature>
<feature type="region of interest" description="Disordered" evidence="1">
    <location>
        <begin position="1"/>
        <end position="77"/>
    </location>
</feature>
<feature type="compositionally biased region" description="Low complexity" evidence="1">
    <location>
        <begin position="19"/>
        <end position="54"/>
    </location>
</feature>
<feature type="compositionally biased region" description="Low complexity" evidence="1">
    <location>
        <begin position="63"/>
        <end position="76"/>
    </location>
</feature>
<accession>P14935</accession>
<accession>D9PYX4</accession>